<comment type="function">
    <text evidence="2">One of the essential components for the initiation of protein synthesis. Protects formylmethionyl-tRNA from spontaneous hydrolysis and promotes its binding to the 30S ribosomal subunits. Also involved in the hydrolysis of GTP during the formation of the 70S ribosomal complex.</text>
</comment>
<comment type="subcellular location">
    <subcellularLocation>
        <location evidence="2">Cytoplasm</location>
    </subcellularLocation>
</comment>
<comment type="similarity">
    <text evidence="2">Belongs to the TRAFAC class translation factor GTPase superfamily. Classic translation factor GTPase family. IF-2 subfamily.</text>
</comment>
<evidence type="ECO:0000250" key="1"/>
<evidence type="ECO:0000255" key="2">
    <source>
        <dbReference type="HAMAP-Rule" id="MF_00100"/>
    </source>
</evidence>
<evidence type="ECO:0000256" key="3">
    <source>
        <dbReference type="SAM" id="MobiDB-lite"/>
    </source>
</evidence>
<protein>
    <recommendedName>
        <fullName evidence="2">Translation initiation factor IF-2</fullName>
    </recommendedName>
</protein>
<keyword id="KW-0963">Cytoplasm</keyword>
<keyword id="KW-0342">GTP-binding</keyword>
<keyword id="KW-0396">Initiation factor</keyword>
<keyword id="KW-0547">Nucleotide-binding</keyword>
<keyword id="KW-0648">Protein biosynthesis</keyword>
<reference key="1">
    <citation type="submission" date="2002-12" db="EMBL/GenBank/DDBJ databases">
        <title>Complete genome sequence of Vibrio vulnificus CMCP6.</title>
        <authorList>
            <person name="Rhee J.H."/>
            <person name="Kim S.Y."/>
            <person name="Chung S.S."/>
            <person name="Kim J.J."/>
            <person name="Moon Y.H."/>
            <person name="Jeong H."/>
            <person name="Choy H.E."/>
        </authorList>
    </citation>
    <scope>NUCLEOTIDE SEQUENCE [LARGE SCALE GENOMIC DNA]</scope>
    <source>
        <strain>CMCP6</strain>
    </source>
</reference>
<accession>Q8DBW0</accession>
<organism>
    <name type="scientific">Vibrio vulnificus (strain CMCP6)</name>
    <dbReference type="NCBI Taxonomy" id="216895"/>
    <lineage>
        <taxon>Bacteria</taxon>
        <taxon>Pseudomonadati</taxon>
        <taxon>Pseudomonadota</taxon>
        <taxon>Gammaproteobacteria</taxon>
        <taxon>Vibrionales</taxon>
        <taxon>Vibrionaceae</taxon>
        <taxon>Vibrio</taxon>
    </lineage>
</organism>
<gene>
    <name evidence="2" type="primary">infB</name>
    <name type="ordered locus">VV1_1696</name>
</gene>
<proteinExistence type="inferred from homology"/>
<feature type="chain" id="PRO_0000137281" description="Translation initiation factor IF-2">
    <location>
        <begin position="1"/>
        <end position="907"/>
    </location>
</feature>
<feature type="domain" description="tr-type G">
    <location>
        <begin position="406"/>
        <end position="575"/>
    </location>
</feature>
<feature type="region of interest" description="Disordered" evidence="3">
    <location>
        <begin position="26"/>
        <end position="317"/>
    </location>
</feature>
<feature type="region of interest" description="G1" evidence="1">
    <location>
        <begin position="415"/>
        <end position="422"/>
    </location>
</feature>
<feature type="region of interest" description="G2" evidence="1">
    <location>
        <begin position="440"/>
        <end position="444"/>
    </location>
</feature>
<feature type="region of interest" description="G3" evidence="1">
    <location>
        <begin position="461"/>
        <end position="464"/>
    </location>
</feature>
<feature type="region of interest" description="G4" evidence="1">
    <location>
        <begin position="515"/>
        <end position="518"/>
    </location>
</feature>
<feature type="region of interest" description="G5" evidence="1">
    <location>
        <begin position="551"/>
        <end position="553"/>
    </location>
</feature>
<feature type="compositionally biased region" description="Basic and acidic residues" evidence="3">
    <location>
        <begin position="28"/>
        <end position="44"/>
    </location>
</feature>
<feature type="compositionally biased region" description="Basic and acidic residues" evidence="3">
    <location>
        <begin position="101"/>
        <end position="248"/>
    </location>
</feature>
<feature type="compositionally biased region" description="Basic residues" evidence="3">
    <location>
        <begin position="299"/>
        <end position="308"/>
    </location>
</feature>
<feature type="binding site" evidence="2">
    <location>
        <begin position="415"/>
        <end position="422"/>
    </location>
    <ligand>
        <name>GTP</name>
        <dbReference type="ChEBI" id="CHEBI:37565"/>
    </ligand>
</feature>
<feature type="binding site" evidence="2">
    <location>
        <begin position="461"/>
        <end position="465"/>
    </location>
    <ligand>
        <name>GTP</name>
        <dbReference type="ChEBI" id="CHEBI:37565"/>
    </ligand>
</feature>
<feature type="binding site" evidence="2">
    <location>
        <begin position="515"/>
        <end position="518"/>
    </location>
    <ligand>
        <name>GTP</name>
        <dbReference type="ChEBI" id="CHEBI:37565"/>
    </ligand>
</feature>
<sequence>MTQLTVKALSEEIGTPVDRLLEQLADAGMKKSSSDQVSDEEKQKLLTHLKKEHGDTSGDAEPTRLTLQRKTRSTLSVNAGGGKSKDVQIEVRKKRTYVKRSAIEDEAKREAEEAAQREAEEAAKRAAEEAAKREAEEAAKREAEEKAKREAEEAAKREAEKSVDRDAEEKAKRDAEGKAKRDAEEKVKQEAARKEAEELKRRQEEEAKRKAEEESQRKLEEAREMAEKNKERWSAAEENKGDMEDTDYHVTTSQYAREAEDEADRKEEEARRRKKKTKSSAKASENDERGGPRVQRGGKGGRKGKLSKPKSMQHGFDKSAVVAKSDVVIGETIVVSELANKMSVKATEVIKIMMKMGAMATINQVIDQETAQLVAEEMGHKVVLRKENELEEAVLSDRDNMFEAVPRAPVVTIMGHVDHGKTSTLDYIRRTHVASGEAGGITQHIGAYHVETENGMITFLDTPGHAAFTAMRARGAQATDIVVLVVAADDGVMPQTVEAIQHAKAAGVPLIVAVNKIDKEEANPDNVKNELSQYNVMPEEWGGENMFVHISAKQGTNIDQLLETILLQAEVLELTAVKDGMASGVVVESRLDKGRGPVATVLVQSGTLRKGDIVLCGQEYGRVRAMRDEIGNEVNEAGPSIPVEILGLSGVPAAGDEATVVRDERKAREVANYRAGKFREVKLARQQKSKLENMFSNMAAGDVAELNIVLKADVQGSVEAIADSLTKLSTEEVKVNIVGSGVGGITETDAVLAEASNAIILGFNVRADASARRAIEAASIDLRYYSIIYQLIDEVKQAMSGMLAPEFKQEIIGLAEVRDVFKSPKLGAIAGCMVTEGLIKRNAPIRVLRDNVVIYEGELESLRRFKDDVAEVKNGYECGIGVKNYNDVRVGDQIEVFETIEIKRTID</sequence>
<name>IF2_VIBVU</name>
<dbReference type="EMBL" id="AE016795">
    <property type="protein sequence ID" value="AAO10112.1"/>
    <property type="molecule type" value="Genomic_DNA"/>
</dbReference>
<dbReference type="RefSeq" id="WP_011079616.1">
    <property type="nucleotide sequence ID" value="NC_004459.3"/>
</dbReference>
<dbReference type="SMR" id="Q8DBW0"/>
<dbReference type="KEGG" id="vvu:VV1_1696"/>
<dbReference type="HOGENOM" id="CLU_006301_6_3_6"/>
<dbReference type="Proteomes" id="UP000002275">
    <property type="component" value="Chromosome 1"/>
</dbReference>
<dbReference type="GO" id="GO:0005829">
    <property type="term" value="C:cytosol"/>
    <property type="evidence" value="ECO:0007669"/>
    <property type="project" value="TreeGrafter"/>
</dbReference>
<dbReference type="GO" id="GO:0005525">
    <property type="term" value="F:GTP binding"/>
    <property type="evidence" value="ECO:0007669"/>
    <property type="project" value="UniProtKB-KW"/>
</dbReference>
<dbReference type="GO" id="GO:0003924">
    <property type="term" value="F:GTPase activity"/>
    <property type="evidence" value="ECO:0007669"/>
    <property type="project" value="UniProtKB-UniRule"/>
</dbReference>
<dbReference type="GO" id="GO:0097216">
    <property type="term" value="F:guanosine tetraphosphate binding"/>
    <property type="evidence" value="ECO:0007669"/>
    <property type="project" value="UniProtKB-ARBA"/>
</dbReference>
<dbReference type="GO" id="GO:0003743">
    <property type="term" value="F:translation initiation factor activity"/>
    <property type="evidence" value="ECO:0007669"/>
    <property type="project" value="UniProtKB-UniRule"/>
</dbReference>
<dbReference type="CDD" id="cd01887">
    <property type="entry name" value="IF2_eIF5B"/>
    <property type="match status" value="1"/>
</dbReference>
<dbReference type="CDD" id="cd03702">
    <property type="entry name" value="IF2_mtIF2_II"/>
    <property type="match status" value="1"/>
</dbReference>
<dbReference type="CDD" id="cd03692">
    <property type="entry name" value="mtIF2_IVc"/>
    <property type="match status" value="1"/>
</dbReference>
<dbReference type="FunFam" id="2.40.30.10:FF:000007">
    <property type="entry name" value="Translation initiation factor IF-2"/>
    <property type="match status" value="1"/>
</dbReference>
<dbReference type="FunFam" id="2.40.30.10:FF:000008">
    <property type="entry name" value="Translation initiation factor IF-2"/>
    <property type="match status" value="1"/>
</dbReference>
<dbReference type="FunFam" id="3.30.56.50:FF:000001">
    <property type="entry name" value="Translation initiation factor IF-2"/>
    <property type="match status" value="1"/>
</dbReference>
<dbReference type="FunFam" id="3.40.50.10050:FF:000001">
    <property type="entry name" value="Translation initiation factor IF-2"/>
    <property type="match status" value="1"/>
</dbReference>
<dbReference type="FunFam" id="3.40.50.300:FF:000019">
    <property type="entry name" value="Translation initiation factor IF-2"/>
    <property type="match status" value="1"/>
</dbReference>
<dbReference type="Gene3D" id="3.40.50.300">
    <property type="entry name" value="P-loop containing nucleotide triphosphate hydrolases"/>
    <property type="match status" value="1"/>
</dbReference>
<dbReference type="Gene3D" id="3.30.56.50">
    <property type="entry name" value="Putative DNA-binding domain, N-terminal subdomain of bacterial translation initiation factor IF2"/>
    <property type="match status" value="1"/>
</dbReference>
<dbReference type="Gene3D" id="2.40.30.10">
    <property type="entry name" value="Translation factors"/>
    <property type="match status" value="2"/>
</dbReference>
<dbReference type="Gene3D" id="3.40.50.10050">
    <property type="entry name" value="Translation initiation factor IF- 2, domain 3"/>
    <property type="match status" value="1"/>
</dbReference>
<dbReference type="HAMAP" id="MF_00100_B">
    <property type="entry name" value="IF_2_B"/>
    <property type="match status" value="1"/>
</dbReference>
<dbReference type="InterPro" id="IPR009061">
    <property type="entry name" value="DNA-bd_dom_put_sf"/>
</dbReference>
<dbReference type="InterPro" id="IPR053905">
    <property type="entry name" value="EF-G-like_DII"/>
</dbReference>
<dbReference type="InterPro" id="IPR004161">
    <property type="entry name" value="EFTu-like_2"/>
</dbReference>
<dbReference type="InterPro" id="IPR013575">
    <property type="entry name" value="IF2_assoc_dom_bac"/>
</dbReference>
<dbReference type="InterPro" id="IPR044145">
    <property type="entry name" value="IF2_II"/>
</dbReference>
<dbReference type="InterPro" id="IPR006847">
    <property type="entry name" value="IF2_N"/>
</dbReference>
<dbReference type="InterPro" id="IPR027417">
    <property type="entry name" value="P-loop_NTPase"/>
</dbReference>
<dbReference type="InterPro" id="IPR005225">
    <property type="entry name" value="Small_GTP-bd"/>
</dbReference>
<dbReference type="InterPro" id="IPR000795">
    <property type="entry name" value="T_Tr_GTP-bd_dom"/>
</dbReference>
<dbReference type="InterPro" id="IPR000178">
    <property type="entry name" value="TF_IF2_bacterial-like"/>
</dbReference>
<dbReference type="InterPro" id="IPR015760">
    <property type="entry name" value="TIF_IF2"/>
</dbReference>
<dbReference type="InterPro" id="IPR023115">
    <property type="entry name" value="TIF_IF2_dom3"/>
</dbReference>
<dbReference type="InterPro" id="IPR036925">
    <property type="entry name" value="TIF_IF2_dom3_sf"/>
</dbReference>
<dbReference type="InterPro" id="IPR009000">
    <property type="entry name" value="Transl_B-barrel_sf"/>
</dbReference>
<dbReference type="NCBIfam" id="TIGR00487">
    <property type="entry name" value="IF-2"/>
    <property type="match status" value="1"/>
</dbReference>
<dbReference type="NCBIfam" id="TIGR00231">
    <property type="entry name" value="small_GTP"/>
    <property type="match status" value="1"/>
</dbReference>
<dbReference type="PANTHER" id="PTHR43381:SF5">
    <property type="entry name" value="TR-TYPE G DOMAIN-CONTAINING PROTEIN"/>
    <property type="match status" value="1"/>
</dbReference>
<dbReference type="PANTHER" id="PTHR43381">
    <property type="entry name" value="TRANSLATION INITIATION FACTOR IF-2-RELATED"/>
    <property type="match status" value="1"/>
</dbReference>
<dbReference type="Pfam" id="PF22042">
    <property type="entry name" value="EF-G_D2"/>
    <property type="match status" value="1"/>
</dbReference>
<dbReference type="Pfam" id="PF00009">
    <property type="entry name" value="GTP_EFTU"/>
    <property type="match status" value="1"/>
</dbReference>
<dbReference type="Pfam" id="PF03144">
    <property type="entry name" value="GTP_EFTU_D2"/>
    <property type="match status" value="1"/>
</dbReference>
<dbReference type="Pfam" id="PF11987">
    <property type="entry name" value="IF-2"/>
    <property type="match status" value="1"/>
</dbReference>
<dbReference type="Pfam" id="PF08364">
    <property type="entry name" value="IF2_assoc"/>
    <property type="match status" value="1"/>
</dbReference>
<dbReference type="Pfam" id="PF04760">
    <property type="entry name" value="IF2_N"/>
    <property type="match status" value="2"/>
</dbReference>
<dbReference type="SUPFAM" id="SSF52156">
    <property type="entry name" value="Initiation factor IF2/eIF5b, domain 3"/>
    <property type="match status" value="1"/>
</dbReference>
<dbReference type="SUPFAM" id="SSF52540">
    <property type="entry name" value="P-loop containing nucleoside triphosphate hydrolases"/>
    <property type="match status" value="1"/>
</dbReference>
<dbReference type="SUPFAM" id="SSF46955">
    <property type="entry name" value="Putative DNA-binding domain"/>
    <property type="match status" value="1"/>
</dbReference>
<dbReference type="SUPFAM" id="SSF50447">
    <property type="entry name" value="Translation proteins"/>
    <property type="match status" value="2"/>
</dbReference>
<dbReference type="PROSITE" id="PS51722">
    <property type="entry name" value="G_TR_2"/>
    <property type="match status" value="1"/>
</dbReference>
<dbReference type="PROSITE" id="PS01176">
    <property type="entry name" value="IF2"/>
    <property type="match status" value="1"/>
</dbReference>